<protein>
    <recommendedName>
        <fullName evidence="1">Ribosomal protein L11 methyltransferase</fullName>
        <shortName evidence="1">L11 Mtase</shortName>
        <ecNumber evidence="1">2.1.1.-</ecNumber>
    </recommendedName>
</protein>
<comment type="function">
    <text evidence="1">Methylates ribosomal protein L11.</text>
</comment>
<comment type="catalytic activity">
    <reaction evidence="1">
        <text>L-lysyl-[protein] + 3 S-adenosyl-L-methionine = N(6),N(6),N(6)-trimethyl-L-lysyl-[protein] + 3 S-adenosyl-L-homocysteine + 3 H(+)</text>
        <dbReference type="Rhea" id="RHEA:54192"/>
        <dbReference type="Rhea" id="RHEA-COMP:9752"/>
        <dbReference type="Rhea" id="RHEA-COMP:13826"/>
        <dbReference type="ChEBI" id="CHEBI:15378"/>
        <dbReference type="ChEBI" id="CHEBI:29969"/>
        <dbReference type="ChEBI" id="CHEBI:57856"/>
        <dbReference type="ChEBI" id="CHEBI:59789"/>
        <dbReference type="ChEBI" id="CHEBI:61961"/>
    </reaction>
</comment>
<comment type="subcellular location">
    <subcellularLocation>
        <location evidence="1">Cytoplasm</location>
    </subcellularLocation>
</comment>
<comment type="similarity">
    <text evidence="1">Belongs to the methyltransferase superfamily. PrmA family.</text>
</comment>
<keyword id="KW-0963">Cytoplasm</keyword>
<keyword id="KW-0489">Methyltransferase</keyword>
<keyword id="KW-0949">S-adenosyl-L-methionine</keyword>
<keyword id="KW-0808">Transferase</keyword>
<reference key="1">
    <citation type="submission" date="2008-04" db="EMBL/GenBank/DDBJ databases">
        <title>Complete sequence of chromosome 1 of Burkholderia ambifaria MC40-6.</title>
        <authorList>
            <person name="Copeland A."/>
            <person name="Lucas S."/>
            <person name="Lapidus A."/>
            <person name="Glavina del Rio T."/>
            <person name="Dalin E."/>
            <person name="Tice H."/>
            <person name="Pitluck S."/>
            <person name="Chain P."/>
            <person name="Malfatti S."/>
            <person name="Shin M."/>
            <person name="Vergez L."/>
            <person name="Lang D."/>
            <person name="Schmutz J."/>
            <person name="Larimer F."/>
            <person name="Land M."/>
            <person name="Hauser L."/>
            <person name="Kyrpides N."/>
            <person name="Lykidis A."/>
            <person name="Ramette A."/>
            <person name="Konstantinidis K."/>
            <person name="Tiedje J."/>
            <person name="Richardson P."/>
        </authorList>
    </citation>
    <scope>NUCLEOTIDE SEQUENCE [LARGE SCALE GENOMIC DNA]</scope>
    <source>
        <strain>MC40-6</strain>
    </source>
</reference>
<evidence type="ECO:0000255" key="1">
    <source>
        <dbReference type="HAMAP-Rule" id="MF_00735"/>
    </source>
</evidence>
<organism>
    <name type="scientific">Burkholderia ambifaria (strain MC40-6)</name>
    <dbReference type="NCBI Taxonomy" id="398577"/>
    <lineage>
        <taxon>Bacteria</taxon>
        <taxon>Pseudomonadati</taxon>
        <taxon>Pseudomonadota</taxon>
        <taxon>Betaproteobacteria</taxon>
        <taxon>Burkholderiales</taxon>
        <taxon>Burkholderiaceae</taxon>
        <taxon>Burkholderia</taxon>
        <taxon>Burkholderia cepacia complex</taxon>
    </lineage>
</organism>
<sequence length="300" mass="32549">MSYRELVVELAREHAEALSDALLELGALSVSVEDADADTPDEQPLFGEPGLVPDRTAWQHSRVIALLSPDHEPAVLLAAAVNDIGVTETPKFDVREVEEQDWVRLTQSQFEPIPIGERIWVVPSWHDAPDPDALILELDPGLAFGTGSHPTTRLCMEWLEQSVKPGQSVLDYGCGSGILAILARKCGANPVVGIDIDPQAVESARQNSERNHAEVTYGLPDACPAGEFDIVVANILSNPLKLMASMLASKVKPGGRIALSGVLARQADEVAAVYARYVDISVWREHEGWVCLAGTRRESH</sequence>
<feature type="chain" id="PRO_1000192589" description="Ribosomal protein L11 methyltransferase">
    <location>
        <begin position="1"/>
        <end position="300"/>
    </location>
</feature>
<feature type="binding site" evidence="1">
    <location>
        <position position="152"/>
    </location>
    <ligand>
        <name>S-adenosyl-L-methionine</name>
        <dbReference type="ChEBI" id="CHEBI:59789"/>
    </ligand>
</feature>
<feature type="binding site" evidence="1">
    <location>
        <position position="173"/>
    </location>
    <ligand>
        <name>S-adenosyl-L-methionine</name>
        <dbReference type="ChEBI" id="CHEBI:59789"/>
    </ligand>
</feature>
<feature type="binding site" evidence="1">
    <location>
        <position position="195"/>
    </location>
    <ligand>
        <name>S-adenosyl-L-methionine</name>
        <dbReference type="ChEBI" id="CHEBI:59789"/>
    </ligand>
</feature>
<feature type="binding site" evidence="1">
    <location>
        <position position="234"/>
    </location>
    <ligand>
        <name>S-adenosyl-L-methionine</name>
        <dbReference type="ChEBI" id="CHEBI:59789"/>
    </ligand>
</feature>
<dbReference type="EC" id="2.1.1.-" evidence="1"/>
<dbReference type="EMBL" id="CP001025">
    <property type="protein sequence ID" value="ACB63026.1"/>
    <property type="molecule type" value="Genomic_DNA"/>
</dbReference>
<dbReference type="RefSeq" id="WP_012363048.1">
    <property type="nucleotide sequence ID" value="NC_010551.1"/>
</dbReference>
<dbReference type="SMR" id="B1YSW5"/>
<dbReference type="KEGG" id="bac:BamMC406_0529"/>
<dbReference type="HOGENOM" id="CLU_049382_4_1_4"/>
<dbReference type="OrthoDB" id="9785995at2"/>
<dbReference type="Proteomes" id="UP000001680">
    <property type="component" value="Chromosome 1"/>
</dbReference>
<dbReference type="GO" id="GO:0005829">
    <property type="term" value="C:cytosol"/>
    <property type="evidence" value="ECO:0007669"/>
    <property type="project" value="TreeGrafter"/>
</dbReference>
<dbReference type="GO" id="GO:0016279">
    <property type="term" value="F:protein-lysine N-methyltransferase activity"/>
    <property type="evidence" value="ECO:0007669"/>
    <property type="project" value="TreeGrafter"/>
</dbReference>
<dbReference type="GO" id="GO:0032259">
    <property type="term" value="P:methylation"/>
    <property type="evidence" value="ECO:0007669"/>
    <property type="project" value="UniProtKB-KW"/>
</dbReference>
<dbReference type="CDD" id="cd02440">
    <property type="entry name" value="AdoMet_MTases"/>
    <property type="match status" value="1"/>
</dbReference>
<dbReference type="Gene3D" id="3.40.50.150">
    <property type="entry name" value="Vaccinia Virus protein VP39"/>
    <property type="match status" value="1"/>
</dbReference>
<dbReference type="HAMAP" id="MF_00735">
    <property type="entry name" value="Methyltr_PrmA"/>
    <property type="match status" value="1"/>
</dbReference>
<dbReference type="InterPro" id="IPR050078">
    <property type="entry name" value="Ribosomal_L11_MeTrfase_PrmA"/>
</dbReference>
<dbReference type="InterPro" id="IPR004498">
    <property type="entry name" value="Ribosomal_PrmA_MeTrfase"/>
</dbReference>
<dbReference type="InterPro" id="IPR029063">
    <property type="entry name" value="SAM-dependent_MTases_sf"/>
</dbReference>
<dbReference type="NCBIfam" id="TIGR00406">
    <property type="entry name" value="prmA"/>
    <property type="match status" value="1"/>
</dbReference>
<dbReference type="PANTHER" id="PTHR43648">
    <property type="entry name" value="ELECTRON TRANSFER FLAVOPROTEIN BETA SUBUNIT LYSINE METHYLTRANSFERASE"/>
    <property type="match status" value="1"/>
</dbReference>
<dbReference type="PANTHER" id="PTHR43648:SF1">
    <property type="entry name" value="ELECTRON TRANSFER FLAVOPROTEIN BETA SUBUNIT LYSINE METHYLTRANSFERASE"/>
    <property type="match status" value="1"/>
</dbReference>
<dbReference type="Pfam" id="PF06325">
    <property type="entry name" value="PrmA"/>
    <property type="match status" value="1"/>
</dbReference>
<dbReference type="PIRSF" id="PIRSF000401">
    <property type="entry name" value="RPL11_MTase"/>
    <property type="match status" value="1"/>
</dbReference>
<dbReference type="SUPFAM" id="SSF53335">
    <property type="entry name" value="S-adenosyl-L-methionine-dependent methyltransferases"/>
    <property type="match status" value="1"/>
</dbReference>
<name>PRMA_BURA4</name>
<proteinExistence type="inferred from homology"/>
<accession>B1YSW5</accession>
<gene>
    <name evidence="1" type="primary">prmA</name>
    <name type="ordered locus">BamMC406_0529</name>
</gene>